<dbReference type="EMBL" id="CP000806">
    <property type="protein sequence ID" value="ACB53599.1"/>
    <property type="molecule type" value="Genomic_DNA"/>
</dbReference>
<dbReference type="RefSeq" id="WP_009543679.1">
    <property type="nucleotide sequence ID" value="NC_010546.1"/>
</dbReference>
<dbReference type="SMR" id="B1WSM0"/>
<dbReference type="STRING" id="43989.cce_4251"/>
<dbReference type="KEGG" id="cyt:cce_4251"/>
<dbReference type="eggNOG" id="COG1058">
    <property type="taxonomic scope" value="Bacteria"/>
</dbReference>
<dbReference type="eggNOG" id="COG1546">
    <property type="taxonomic scope" value="Bacteria"/>
</dbReference>
<dbReference type="HOGENOM" id="CLU_030805_9_3_3"/>
<dbReference type="OrthoDB" id="9801454at2"/>
<dbReference type="Proteomes" id="UP000001203">
    <property type="component" value="Chromosome circular"/>
</dbReference>
<dbReference type="CDD" id="cd00885">
    <property type="entry name" value="cinA"/>
    <property type="match status" value="1"/>
</dbReference>
<dbReference type="Gene3D" id="3.30.70.2860">
    <property type="match status" value="1"/>
</dbReference>
<dbReference type="Gene3D" id="3.90.950.20">
    <property type="entry name" value="CinA-like"/>
    <property type="match status" value="1"/>
</dbReference>
<dbReference type="Gene3D" id="3.40.980.10">
    <property type="entry name" value="MoaB/Mog-like domain"/>
    <property type="match status" value="1"/>
</dbReference>
<dbReference type="HAMAP" id="MF_00226_B">
    <property type="entry name" value="CinA_B"/>
    <property type="match status" value="1"/>
</dbReference>
<dbReference type="InterPro" id="IPR050101">
    <property type="entry name" value="CinA"/>
</dbReference>
<dbReference type="InterPro" id="IPR036653">
    <property type="entry name" value="CinA-like_C"/>
</dbReference>
<dbReference type="InterPro" id="IPR008136">
    <property type="entry name" value="CinA_C"/>
</dbReference>
<dbReference type="InterPro" id="IPR041424">
    <property type="entry name" value="CinA_KH"/>
</dbReference>
<dbReference type="InterPro" id="IPR008135">
    <property type="entry name" value="Competence-induced_CinA"/>
</dbReference>
<dbReference type="InterPro" id="IPR036425">
    <property type="entry name" value="MoaB/Mog-like_dom_sf"/>
</dbReference>
<dbReference type="InterPro" id="IPR001453">
    <property type="entry name" value="MoaB/Mog_dom"/>
</dbReference>
<dbReference type="NCBIfam" id="TIGR00200">
    <property type="entry name" value="cinA_nterm"/>
    <property type="match status" value="1"/>
</dbReference>
<dbReference type="NCBIfam" id="TIGR00177">
    <property type="entry name" value="molyb_syn"/>
    <property type="match status" value="1"/>
</dbReference>
<dbReference type="NCBIfam" id="TIGR00199">
    <property type="entry name" value="PncC_domain"/>
    <property type="match status" value="1"/>
</dbReference>
<dbReference type="NCBIfam" id="NF001813">
    <property type="entry name" value="PRK00549.1"/>
    <property type="match status" value="1"/>
</dbReference>
<dbReference type="PANTHER" id="PTHR13939">
    <property type="entry name" value="NICOTINAMIDE-NUCLEOTIDE AMIDOHYDROLASE PNCC"/>
    <property type="match status" value="1"/>
</dbReference>
<dbReference type="PANTHER" id="PTHR13939:SF0">
    <property type="entry name" value="NMN AMIDOHYDROLASE-LIKE PROTEIN YFAY"/>
    <property type="match status" value="1"/>
</dbReference>
<dbReference type="Pfam" id="PF02464">
    <property type="entry name" value="CinA"/>
    <property type="match status" value="1"/>
</dbReference>
<dbReference type="Pfam" id="PF18146">
    <property type="entry name" value="CinA_KH"/>
    <property type="match status" value="1"/>
</dbReference>
<dbReference type="Pfam" id="PF00994">
    <property type="entry name" value="MoCF_biosynth"/>
    <property type="match status" value="1"/>
</dbReference>
<dbReference type="PIRSF" id="PIRSF006728">
    <property type="entry name" value="CinA"/>
    <property type="match status" value="1"/>
</dbReference>
<dbReference type="SMART" id="SM00852">
    <property type="entry name" value="MoCF_biosynth"/>
    <property type="match status" value="1"/>
</dbReference>
<dbReference type="SUPFAM" id="SSF142433">
    <property type="entry name" value="CinA-like"/>
    <property type="match status" value="1"/>
</dbReference>
<dbReference type="SUPFAM" id="SSF53218">
    <property type="entry name" value="Molybdenum cofactor biosynthesis proteins"/>
    <property type="match status" value="1"/>
</dbReference>
<evidence type="ECO:0000255" key="1">
    <source>
        <dbReference type="HAMAP-Rule" id="MF_00226"/>
    </source>
</evidence>
<accession>B1WSM0</accession>
<reference key="1">
    <citation type="journal article" date="2008" name="Proc. Natl. Acad. Sci. U.S.A.">
        <title>The genome of Cyanothece 51142, a unicellular diazotrophic cyanobacterium important in the marine nitrogen cycle.</title>
        <authorList>
            <person name="Welsh E.A."/>
            <person name="Liberton M."/>
            <person name="Stoeckel J."/>
            <person name="Loh T."/>
            <person name="Elvitigala T."/>
            <person name="Wang C."/>
            <person name="Wollam A."/>
            <person name="Fulton R.S."/>
            <person name="Clifton S.W."/>
            <person name="Jacobs J.M."/>
            <person name="Aurora R."/>
            <person name="Ghosh B.K."/>
            <person name="Sherman L.A."/>
            <person name="Smith R.D."/>
            <person name="Wilson R.K."/>
            <person name="Pakrasi H.B."/>
        </authorList>
    </citation>
    <scope>NUCLEOTIDE SEQUENCE [LARGE SCALE GENOMIC DNA]</scope>
    <source>
        <strain>ATCC 51142 / BH68</strain>
    </source>
</reference>
<feature type="chain" id="PRO_1000100313" description="CinA-like protein">
    <location>
        <begin position="1"/>
        <end position="413"/>
    </location>
</feature>
<sequence>MSAEIICVGTELLLGDIVNTNVQFLAKELANLGIPHYYQTVVGDNPTRLREVITIASKRASILLFTGGLGPTPDDLTTETIAQCFHSPLVEKAEIIEDIQDKFKARGRQMNENNRKQALIPKGATILPNPTGTAPGIIWEPIPNVTIMTFPGVPSEMKRMWSETAVPHLKSQGWGKEVIFSRMLRFRGIGESSLATKVNRFFNLTNPTVAPYASLGEVRLRISAKTASETEANAIIEPVAQEIIKIAGEDYFGQDDDTLGKVVGELLRQKQQTVSVAESCTGGGLGAMFTEIAGSSDYFWGGVIAYDNCVKMSLLEVSAEALDHHGAVSDIVAQQMALGIKKRLETDWGMSITGIAGPGGGTDIKPVGLVYIGIADPDGNVESVECTFGDRSRDIIRYLSSCTALDQLRRKLI</sequence>
<protein>
    <recommendedName>
        <fullName evidence="1">CinA-like protein</fullName>
    </recommendedName>
</protein>
<organism>
    <name type="scientific">Crocosphaera subtropica (strain ATCC 51142 / BH68)</name>
    <name type="common">Cyanothece sp. (strain ATCC 51142)</name>
    <dbReference type="NCBI Taxonomy" id="43989"/>
    <lineage>
        <taxon>Bacteria</taxon>
        <taxon>Bacillati</taxon>
        <taxon>Cyanobacteriota</taxon>
        <taxon>Cyanophyceae</taxon>
        <taxon>Oscillatoriophycideae</taxon>
        <taxon>Chroococcales</taxon>
        <taxon>Aphanothecaceae</taxon>
        <taxon>Crocosphaera</taxon>
        <taxon>Crocosphaera subtropica</taxon>
    </lineage>
</organism>
<comment type="similarity">
    <text evidence="1">Belongs to the CinA family.</text>
</comment>
<proteinExistence type="inferred from homology"/>
<name>CINAL_CROS5</name>
<gene>
    <name type="ordered locus">cce_4251</name>
</gene>
<keyword id="KW-1185">Reference proteome</keyword>